<dbReference type="EC" id="4.1.1.50"/>
<dbReference type="EMBL" id="AJ250026">
    <property type="protein sequence ID" value="CAB76966.1"/>
    <property type="molecule type" value="mRNA"/>
</dbReference>
<dbReference type="SMR" id="Q9M4D8"/>
<dbReference type="EnsemblPlants" id="Vfaba.Hedin2.R1.1g199880.1">
    <property type="protein sequence ID" value="cds:Vfaba.Hedin2.R1.1g199880.1"/>
    <property type="gene ID" value="Vfaba.Hedin2.R1.1g199880"/>
</dbReference>
<dbReference type="Gramene" id="Vfaba.Hedin2.R1.1g199880.1">
    <property type="protein sequence ID" value="cds:Vfaba.Hedin2.R1.1g199880.1"/>
    <property type="gene ID" value="Vfaba.Hedin2.R1.1g199880"/>
</dbReference>
<dbReference type="OrthoDB" id="1068353at2759"/>
<dbReference type="UniPathway" id="UPA00331">
    <property type="reaction ID" value="UER00451"/>
</dbReference>
<dbReference type="GO" id="GO:0005829">
    <property type="term" value="C:cytosol"/>
    <property type="evidence" value="ECO:0007669"/>
    <property type="project" value="TreeGrafter"/>
</dbReference>
<dbReference type="GO" id="GO:0004014">
    <property type="term" value="F:adenosylmethionine decarboxylase activity"/>
    <property type="evidence" value="ECO:0007669"/>
    <property type="project" value="UniProtKB-EC"/>
</dbReference>
<dbReference type="GO" id="GO:0008295">
    <property type="term" value="P:spermidine biosynthetic process"/>
    <property type="evidence" value="ECO:0007669"/>
    <property type="project" value="UniProtKB-KW"/>
</dbReference>
<dbReference type="GO" id="GO:0006597">
    <property type="term" value="P:spermine biosynthetic process"/>
    <property type="evidence" value="ECO:0007669"/>
    <property type="project" value="InterPro"/>
</dbReference>
<dbReference type="FunFam" id="3.30.360.50:FF:000001">
    <property type="entry name" value="S-adenosylmethionine decarboxylase proenzyme"/>
    <property type="match status" value="1"/>
</dbReference>
<dbReference type="FunFam" id="3.60.90.10:FF:000002">
    <property type="entry name" value="S-adenosylmethionine decarboxylase proenzyme"/>
    <property type="match status" value="1"/>
</dbReference>
<dbReference type="Gene3D" id="3.30.360.50">
    <property type="entry name" value="S-adenosylmethionine decarboxylase"/>
    <property type="match status" value="1"/>
</dbReference>
<dbReference type="Gene3D" id="3.60.90.10">
    <property type="entry name" value="S-adenosylmethionine decarboxylase"/>
    <property type="match status" value="1"/>
</dbReference>
<dbReference type="InterPro" id="IPR048283">
    <property type="entry name" value="AdoMetDC-like"/>
</dbReference>
<dbReference type="InterPro" id="IPR001985">
    <property type="entry name" value="S-AdoMet_decarboxylase_euk"/>
</dbReference>
<dbReference type="InterPro" id="IPR016067">
    <property type="entry name" value="S-AdoMet_deCO2ase_core"/>
</dbReference>
<dbReference type="InterPro" id="IPR018166">
    <property type="entry name" value="S-AdoMet_deCO2ase_CS"/>
</dbReference>
<dbReference type="NCBIfam" id="TIGR00535">
    <property type="entry name" value="SAM_DCase"/>
    <property type="match status" value="1"/>
</dbReference>
<dbReference type="PANTHER" id="PTHR11570">
    <property type="entry name" value="S-ADENOSYLMETHIONINE DECARBOXYLASE"/>
    <property type="match status" value="1"/>
</dbReference>
<dbReference type="PANTHER" id="PTHR11570:SF15">
    <property type="entry name" value="S-ADENOSYLMETHIONINE DECARBOXYLASE PROENZYME 3"/>
    <property type="match status" value="1"/>
</dbReference>
<dbReference type="Pfam" id="PF01536">
    <property type="entry name" value="SAM_decarbox"/>
    <property type="match status" value="1"/>
</dbReference>
<dbReference type="PIRSF" id="PIRSF001355">
    <property type="entry name" value="S-AdenosylMet_decarboxylase"/>
    <property type="match status" value="1"/>
</dbReference>
<dbReference type="SUPFAM" id="SSF56276">
    <property type="entry name" value="S-adenosylmethionine decarboxylase"/>
    <property type="match status" value="1"/>
</dbReference>
<dbReference type="PROSITE" id="PS01336">
    <property type="entry name" value="ADOMETDC"/>
    <property type="match status" value="1"/>
</dbReference>
<comment type="catalytic activity">
    <reaction>
        <text>S-adenosyl-L-methionine + H(+) = S-adenosyl 3-(methylsulfanyl)propylamine + CO2</text>
        <dbReference type="Rhea" id="RHEA:15981"/>
        <dbReference type="ChEBI" id="CHEBI:15378"/>
        <dbReference type="ChEBI" id="CHEBI:16526"/>
        <dbReference type="ChEBI" id="CHEBI:57443"/>
        <dbReference type="ChEBI" id="CHEBI:59789"/>
        <dbReference type="EC" id="4.1.1.50"/>
    </reaction>
</comment>
<comment type="cofactor">
    <cofactor evidence="1">
        <name>pyruvate</name>
        <dbReference type="ChEBI" id="CHEBI:15361"/>
    </cofactor>
    <text evidence="1">Binds 1 pyruvoyl group covalently per subunit.</text>
</comment>
<comment type="pathway">
    <text>Amine and polyamine biosynthesis; S-adenosylmethioninamine biosynthesis; S-adenosylmethioninamine from S-adenosyl-L-methionine: step 1/1.</text>
</comment>
<comment type="PTM">
    <text evidence="1">Is synthesized initially as an inactive proenzyme. Formation of the active enzyme involves a self-maturation process in which the active site pyruvoyl group is generated from an internal serine residue via an autocatalytic post-translational modification. Two non-identical subunits are generated from the proenzyme in this reaction, and the pyruvate is formed at the N-terminus of the alpha chain, which is derived from the carboxyl end of the proenzyme. The post-translation cleavage follows an unusual pathway, termed non-hydrolytic serinolysis, in which the side chain hydroxyl group of the serine supplies its oxygen atom to form the C-terminus of the beta chain, while the remainder of the serine residue undergoes an oxidative deamination to produce ammonia and the pyruvoyl group blocking the N-terminus of the alpha chain (By similarity).</text>
</comment>
<comment type="similarity">
    <text evidence="2">Belongs to the eukaryotic AdoMetDC family.</text>
</comment>
<evidence type="ECO:0000250" key="1"/>
<evidence type="ECO:0000305" key="2"/>
<keyword id="KW-0068">Autocatalytic cleavage</keyword>
<keyword id="KW-0210">Decarboxylase</keyword>
<keyword id="KW-0456">Lyase</keyword>
<keyword id="KW-0620">Polyamine biosynthesis</keyword>
<keyword id="KW-0670">Pyruvate</keyword>
<keyword id="KW-0949">S-adenosyl-L-methionine</keyword>
<keyword id="KW-0704">Schiff base</keyword>
<keyword id="KW-0745">Spermidine biosynthesis</keyword>
<keyword id="KW-0865">Zymogen</keyword>
<gene>
    <name type="primary">SAMDC</name>
</gene>
<name>DCAM_VICFA</name>
<organism>
    <name type="scientific">Vicia faba</name>
    <name type="common">Broad bean</name>
    <name type="synonym">Faba vulgaris</name>
    <dbReference type="NCBI Taxonomy" id="3906"/>
    <lineage>
        <taxon>Eukaryota</taxon>
        <taxon>Viridiplantae</taxon>
        <taxon>Streptophyta</taxon>
        <taxon>Embryophyta</taxon>
        <taxon>Tracheophyta</taxon>
        <taxon>Spermatophyta</taxon>
        <taxon>Magnoliopsida</taxon>
        <taxon>eudicotyledons</taxon>
        <taxon>Gunneridae</taxon>
        <taxon>Pentapetalae</taxon>
        <taxon>rosids</taxon>
        <taxon>fabids</taxon>
        <taxon>Fabales</taxon>
        <taxon>Fabaceae</taxon>
        <taxon>Papilionoideae</taxon>
        <taxon>50 kb inversion clade</taxon>
        <taxon>NPAAA clade</taxon>
        <taxon>Hologalegina</taxon>
        <taxon>IRL clade</taxon>
        <taxon>Fabeae</taxon>
        <taxon>Vicia</taxon>
    </lineage>
</organism>
<proteinExistence type="evidence at transcript level"/>
<reference key="1">
    <citation type="online journal article" date="2000" name="Plant Gene Register">
        <title>Isolation and characterization of a full-length cDNA encoding S-adenosylmethionine decarboxylase from broad bean (Vicia faba L.).</title>
        <authorList>
            <person name="Fruehling M."/>
            <person name="Puehler A."/>
            <person name="Perlick A.M."/>
        </authorList>
        <locator>PGR00-029</locator>
    </citation>
    <scope>NUCLEOTIDE SEQUENCE [MRNA]</scope>
    <source>
        <strain>cv. Kleine Thueringer</strain>
        <tissue>Root nodule</tissue>
    </source>
</reference>
<protein>
    <recommendedName>
        <fullName>S-adenosylmethionine decarboxylase proenzyme</fullName>
        <shortName>AdoMetDC</shortName>
        <shortName>SAMDC</shortName>
        <ecNumber>4.1.1.50</ecNumber>
    </recommendedName>
    <component>
        <recommendedName>
            <fullName>S-adenosylmethionine decarboxylase alpha chain</fullName>
        </recommendedName>
    </component>
    <component>
        <recommendedName>
            <fullName>S-adenosylmethionine decarboxylase beta chain</fullName>
        </recommendedName>
    </component>
</protein>
<sequence length="353" mass="38513">MAVSAIGFEGFEKRLEISFSDPGLFSDPQGRGLRSLTKSQLDEILAPAECTIVSSLANEDVDSYVLSESSLFVYAYKIIIKTCGTTKLLLAIPPILKLAESISLDVRAVRYTRGSFIFPGAQSFPHRHFSEEVAVLDGFFGKLGSGSKAYIMGGSDEAQNWHVYCASADSVSPADSVYTLEMCMTGLDREKASVFFKQQTGSAAEMTVNSGIRKILPNSEICDFDFEPCGYSMNSVEGPAVSTIHITPEDGFSYASFETAGYDLKAMNLNEMVMRVLACFQPTEFSVAVHVDNASKSFEQGCLLDVKGYCCDEKSHQGLGMSGSVVYQKFVKASDCGSPRSTLKCWKDEDEEE</sequence>
<feature type="chain" id="PRO_0000030029" description="S-adenosylmethionine decarboxylase beta chain" evidence="1">
    <location>
        <begin position="1"/>
        <end position="68"/>
    </location>
</feature>
<feature type="chain" id="PRO_0000030030" description="S-adenosylmethionine decarboxylase alpha chain" evidence="1">
    <location>
        <begin position="69"/>
        <end position="353"/>
    </location>
</feature>
<feature type="active site" evidence="1">
    <location>
        <position position="9"/>
    </location>
</feature>
<feature type="active site" evidence="1">
    <location>
        <position position="12"/>
    </location>
</feature>
<feature type="active site" description="Schiff-base intermediate with substrate; via pyruvic acid" evidence="1">
    <location>
        <position position="69"/>
    </location>
</feature>
<feature type="active site" description="Proton donor; for catalytic activity" evidence="1">
    <location>
        <position position="83"/>
    </location>
</feature>
<feature type="active site" description="Proton acceptor; for processing activity" evidence="1">
    <location>
        <position position="232"/>
    </location>
</feature>
<feature type="active site" description="Proton acceptor; for processing activity" evidence="1">
    <location>
        <position position="245"/>
    </location>
</feature>
<feature type="site" description="Cleavage (non-hydrolytic); by autolysis" evidence="1">
    <location>
        <begin position="68"/>
        <end position="69"/>
    </location>
</feature>
<feature type="modified residue" description="Pyruvic acid (Ser); by autocatalysis" evidence="1">
    <location>
        <position position="69"/>
    </location>
</feature>
<accession>Q9M4D8</accession>